<gene>
    <name evidence="1" type="primary">murC</name>
    <name type="ordered locus">plu3653</name>
</gene>
<protein>
    <recommendedName>
        <fullName evidence="1">UDP-N-acetylmuramate--L-alanine ligase</fullName>
        <ecNumber evidence="1">6.3.2.8</ecNumber>
    </recommendedName>
    <alternativeName>
        <fullName evidence="1">UDP-N-acetylmuramoyl-L-alanine synthetase</fullName>
    </alternativeName>
</protein>
<name>MURC_PHOLL</name>
<evidence type="ECO:0000255" key="1">
    <source>
        <dbReference type="HAMAP-Rule" id="MF_00046"/>
    </source>
</evidence>
<feature type="chain" id="PRO_0000182128" description="UDP-N-acetylmuramate--L-alanine ligase">
    <location>
        <begin position="1"/>
        <end position="491"/>
    </location>
</feature>
<feature type="binding site" evidence="1">
    <location>
        <begin position="126"/>
        <end position="132"/>
    </location>
    <ligand>
        <name>ATP</name>
        <dbReference type="ChEBI" id="CHEBI:30616"/>
    </ligand>
</feature>
<reference key="1">
    <citation type="journal article" date="2003" name="Nat. Biotechnol.">
        <title>The genome sequence of the entomopathogenic bacterium Photorhabdus luminescens.</title>
        <authorList>
            <person name="Duchaud E."/>
            <person name="Rusniok C."/>
            <person name="Frangeul L."/>
            <person name="Buchrieser C."/>
            <person name="Givaudan A."/>
            <person name="Taourit S."/>
            <person name="Bocs S."/>
            <person name="Boursaux-Eude C."/>
            <person name="Chandler M."/>
            <person name="Charles J.-F."/>
            <person name="Dassa E."/>
            <person name="Derose R."/>
            <person name="Derzelle S."/>
            <person name="Freyssinet G."/>
            <person name="Gaudriault S."/>
            <person name="Medigue C."/>
            <person name="Lanois A."/>
            <person name="Powell K."/>
            <person name="Siguier P."/>
            <person name="Vincent R."/>
            <person name="Wingate V."/>
            <person name="Zouine M."/>
            <person name="Glaser P."/>
            <person name="Boemare N."/>
            <person name="Danchin A."/>
            <person name="Kunst F."/>
        </authorList>
    </citation>
    <scope>NUCLEOTIDE SEQUENCE [LARGE SCALE GENOMIC DNA]</scope>
    <source>
        <strain>DSM 15139 / CIP 105565 / TT01</strain>
    </source>
</reference>
<dbReference type="EC" id="6.3.2.8" evidence="1"/>
<dbReference type="EMBL" id="BX571871">
    <property type="protein sequence ID" value="CAE16026.1"/>
    <property type="molecule type" value="Genomic_DNA"/>
</dbReference>
<dbReference type="RefSeq" id="WP_011147816.1">
    <property type="nucleotide sequence ID" value="NC_005126.1"/>
</dbReference>
<dbReference type="SMR" id="Q7N148"/>
<dbReference type="STRING" id="243265.plu3653"/>
<dbReference type="GeneID" id="48849896"/>
<dbReference type="KEGG" id="plu:plu3653"/>
<dbReference type="eggNOG" id="COG0773">
    <property type="taxonomic scope" value="Bacteria"/>
</dbReference>
<dbReference type="HOGENOM" id="CLU_028104_2_2_6"/>
<dbReference type="OrthoDB" id="9804126at2"/>
<dbReference type="UniPathway" id="UPA00219"/>
<dbReference type="Proteomes" id="UP000002514">
    <property type="component" value="Chromosome"/>
</dbReference>
<dbReference type="GO" id="GO:0005737">
    <property type="term" value="C:cytoplasm"/>
    <property type="evidence" value="ECO:0007669"/>
    <property type="project" value="UniProtKB-SubCell"/>
</dbReference>
<dbReference type="GO" id="GO:0005524">
    <property type="term" value="F:ATP binding"/>
    <property type="evidence" value="ECO:0007669"/>
    <property type="project" value="UniProtKB-UniRule"/>
</dbReference>
<dbReference type="GO" id="GO:0008763">
    <property type="term" value="F:UDP-N-acetylmuramate-L-alanine ligase activity"/>
    <property type="evidence" value="ECO:0007669"/>
    <property type="project" value="UniProtKB-UniRule"/>
</dbReference>
<dbReference type="GO" id="GO:0051301">
    <property type="term" value="P:cell division"/>
    <property type="evidence" value="ECO:0007669"/>
    <property type="project" value="UniProtKB-KW"/>
</dbReference>
<dbReference type="GO" id="GO:0071555">
    <property type="term" value="P:cell wall organization"/>
    <property type="evidence" value="ECO:0007669"/>
    <property type="project" value="UniProtKB-KW"/>
</dbReference>
<dbReference type="GO" id="GO:0009252">
    <property type="term" value="P:peptidoglycan biosynthetic process"/>
    <property type="evidence" value="ECO:0007669"/>
    <property type="project" value="UniProtKB-UniRule"/>
</dbReference>
<dbReference type="GO" id="GO:0008360">
    <property type="term" value="P:regulation of cell shape"/>
    <property type="evidence" value="ECO:0007669"/>
    <property type="project" value="UniProtKB-KW"/>
</dbReference>
<dbReference type="FunFam" id="3.40.1190.10:FF:000001">
    <property type="entry name" value="UDP-N-acetylmuramate--L-alanine ligase"/>
    <property type="match status" value="1"/>
</dbReference>
<dbReference type="FunFam" id="3.40.50.720:FF:000046">
    <property type="entry name" value="UDP-N-acetylmuramate--L-alanine ligase"/>
    <property type="match status" value="1"/>
</dbReference>
<dbReference type="FunFam" id="3.90.190.20:FF:000001">
    <property type="entry name" value="UDP-N-acetylmuramate--L-alanine ligase"/>
    <property type="match status" value="1"/>
</dbReference>
<dbReference type="Gene3D" id="3.90.190.20">
    <property type="entry name" value="Mur ligase, C-terminal domain"/>
    <property type="match status" value="1"/>
</dbReference>
<dbReference type="Gene3D" id="3.40.1190.10">
    <property type="entry name" value="Mur-like, catalytic domain"/>
    <property type="match status" value="1"/>
</dbReference>
<dbReference type="Gene3D" id="3.40.50.720">
    <property type="entry name" value="NAD(P)-binding Rossmann-like Domain"/>
    <property type="match status" value="1"/>
</dbReference>
<dbReference type="HAMAP" id="MF_00046">
    <property type="entry name" value="MurC"/>
    <property type="match status" value="1"/>
</dbReference>
<dbReference type="InterPro" id="IPR036565">
    <property type="entry name" value="Mur-like_cat_sf"/>
</dbReference>
<dbReference type="InterPro" id="IPR004101">
    <property type="entry name" value="Mur_ligase_C"/>
</dbReference>
<dbReference type="InterPro" id="IPR036615">
    <property type="entry name" value="Mur_ligase_C_dom_sf"/>
</dbReference>
<dbReference type="InterPro" id="IPR013221">
    <property type="entry name" value="Mur_ligase_cen"/>
</dbReference>
<dbReference type="InterPro" id="IPR000713">
    <property type="entry name" value="Mur_ligase_N"/>
</dbReference>
<dbReference type="InterPro" id="IPR050061">
    <property type="entry name" value="MurCDEF_pg_biosynth"/>
</dbReference>
<dbReference type="InterPro" id="IPR005758">
    <property type="entry name" value="UDP-N-AcMur_Ala_ligase_MurC"/>
</dbReference>
<dbReference type="NCBIfam" id="TIGR01082">
    <property type="entry name" value="murC"/>
    <property type="match status" value="1"/>
</dbReference>
<dbReference type="PANTHER" id="PTHR43445:SF3">
    <property type="entry name" value="UDP-N-ACETYLMURAMATE--L-ALANINE LIGASE"/>
    <property type="match status" value="1"/>
</dbReference>
<dbReference type="PANTHER" id="PTHR43445">
    <property type="entry name" value="UDP-N-ACETYLMURAMATE--L-ALANINE LIGASE-RELATED"/>
    <property type="match status" value="1"/>
</dbReference>
<dbReference type="Pfam" id="PF01225">
    <property type="entry name" value="Mur_ligase"/>
    <property type="match status" value="1"/>
</dbReference>
<dbReference type="Pfam" id="PF02875">
    <property type="entry name" value="Mur_ligase_C"/>
    <property type="match status" value="1"/>
</dbReference>
<dbReference type="Pfam" id="PF08245">
    <property type="entry name" value="Mur_ligase_M"/>
    <property type="match status" value="1"/>
</dbReference>
<dbReference type="SUPFAM" id="SSF51984">
    <property type="entry name" value="MurCD N-terminal domain"/>
    <property type="match status" value="1"/>
</dbReference>
<dbReference type="SUPFAM" id="SSF53623">
    <property type="entry name" value="MurD-like peptide ligases, catalytic domain"/>
    <property type="match status" value="1"/>
</dbReference>
<dbReference type="SUPFAM" id="SSF53244">
    <property type="entry name" value="MurD-like peptide ligases, peptide-binding domain"/>
    <property type="match status" value="1"/>
</dbReference>
<keyword id="KW-0067">ATP-binding</keyword>
<keyword id="KW-0131">Cell cycle</keyword>
<keyword id="KW-0132">Cell division</keyword>
<keyword id="KW-0133">Cell shape</keyword>
<keyword id="KW-0961">Cell wall biogenesis/degradation</keyword>
<keyword id="KW-0963">Cytoplasm</keyword>
<keyword id="KW-0436">Ligase</keyword>
<keyword id="KW-0547">Nucleotide-binding</keyword>
<keyword id="KW-0573">Peptidoglycan synthesis</keyword>
<keyword id="KW-1185">Reference proteome</keyword>
<sequence>MNTQQLAKLRAFVPEMRKVRHIHFVGIGGAGMGGIAEVLANEGYQISGSDLAPNPVTRQLTKLGAQIYFNHRPENILDASVVVASSAILADNPEIVAAREARIPVIRRAEMLAELMRYRHGIAIAGTHGKTTTTAMISSIYAQAGLDPTFVNGGLVKAAGTHARLGSSRYLIAEADESDASFLHLQPMVAVITNIEADHMDTYHGDFENLKQTFINFLHNLPFYGRAVMCIDDPVVKELIPRVGRYITTYGFSEEADVRITHYQQKGAQGYFTVSRQDMADLKVVLNAPGRHNALNAAAAVAVATEEGISGSDILAALAGFQGTGRRFDFLGNFSLEHVNGKGGSAMLVDDYGHHPTEVDATIKAARAGWPDKRIVMIFQPHRYTRTRDLYDDFANVLNQVDVLLMLDVYSAGEVVIPGADSRSLCRTIRSRGKLDPILVSDPAKVTAVLAQVLDGHDLILVQGAGNIGKIARNLAETKLQPSLNEEKHNG</sequence>
<accession>Q7N148</accession>
<organism>
    <name type="scientific">Photorhabdus laumondii subsp. laumondii (strain DSM 15139 / CIP 105565 / TT01)</name>
    <name type="common">Photorhabdus luminescens subsp. laumondii</name>
    <dbReference type="NCBI Taxonomy" id="243265"/>
    <lineage>
        <taxon>Bacteria</taxon>
        <taxon>Pseudomonadati</taxon>
        <taxon>Pseudomonadota</taxon>
        <taxon>Gammaproteobacteria</taxon>
        <taxon>Enterobacterales</taxon>
        <taxon>Morganellaceae</taxon>
        <taxon>Photorhabdus</taxon>
    </lineage>
</organism>
<comment type="function">
    <text evidence="1">Cell wall formation.</text>
</comment>
<comment type="catalytic activity">
    <reaction evidence="1">
        <text>UDP-N-acetyl-alpha-D-muramate + L-alanine + ATP = UDP-N-acetyl-alpha-D-muramoyl-L-alanine + ADP + phosphate + H(+)</text>
        <dbReference type="Rhea" id="RHEA:23372"/>
        <dbReference type="ChEBI" id="CHEBI:15378"/>
        <dbReference type="ChEBI" id="CHEBI:30616"/>
        <dbReference type="ChEBI" id="CHEBI:43474"/>
        <dbReference type="ChEBI" id="CHEBI:57972"/>
        <dbReference type="ChEBI" id="CHEBI:70757"/>
        <dbReference type="ChEBI" id="CHEBI:83898"/>
        <dbReference type="ChEBI" id="CHEBI:456216"/>
        <dbReference type="EC" id="6.3.2.8"/>
    </reaction>
</comment>
<comment type="pathway">
    <text evidence="1">Cell wall biogenesis; peptidoglycan biosynthesis.</text>
</comment>
<comment type="subcellular location">
    <subcellularLocation>
        <location evidence="1">Cytoplasm</location>
    </subcellularLocation>
</comment>
<comment type="similarity">
    <text evidence="1">Belongs to the MurCDEF family.</text>
</comment>
<proteinExistence type="inferred from homology"/>